<proteinExistence type="inferred from homology"/>
<accession>A7ME47</accession>
<gene>
    <name evidence="1" type="primary">mgsA</name>
    <name type="ordered locus">ESA_02385</name>
</gene>
<feature type="chain" id="PRO_1000017808" description="Methylglyoxal synthase">
    <location>
        <begin position="1"/>
        <end position="152"/>
    </location>
</feature>
<feature type="domain" description="MGS-like" evidence="1">
    <location>
        <begin position="6"/>
        <end position="152"/>
    </location>
</feature>
<feature type="active site" description="Proton donor/acceptor" evidence="1">
    <location>
        <position position="71"/>
    </location>
</feature>
<feature type="binding site" evidence="1">
    <location>
        <position position="19"/>
    </location>
    <ligand>
        <name>substrate</name>
    </ligand>
</feature>
<feature type="binding site" evidence="1">
    <location>
        <position position="23"/>
    </location>
    <ligand>
        <name>substrate</name>
    </ligand>
</feature>
<feature type="binding site" evidence="1">
    <location>
        <begin position="45"/>
        <end position="48"/>
    </location>
    <ligand>
        <name>substrate</name>
    </ligand>
</feature>
<feature type="binding site" evidence="1">
    <location>
        <begin position="65"/>
        <end position="66"/>
    </location>
    <ligand>
        <name>substrate</name>
    </ligand>
</feature>
<feature type="binding site" evidence="1">
    <location>
        <position position="98"/>
    </location>
    <ligand>
        <name>substrate</name>
    </ligand>
</feature>
<reference key="1">
    <citation type="journal article" date="2010" name="PLoS ONE">
        <title>Genome sequence of Cronobacter sakazakii BAA-894 and comparative genomic hybridization analysis with other Cronobacter species.</title>
        <authorList>
            <person name="Kucerova E."/>
            <person name="Clifton S.W."/>
            <person name="Xia X.Q."/>
            <person name="Long F."/>
            <person name="Porwollik S."/>
            <person name="Fulton L."/>
            <person name="Fronick C."/>
            <person name="Minx P."/>
            <person name="Kyung K."/>
            <person name="Warren W."/>
            <person name="Fulton R."/>
            <person name="Feng D."/>
            <person name="Wollam A."/>
            <person name="Shah N."/>
            <person name="Bhonagiri V."/>
            <person name="Nash W.E."/>
            <person name="Hallsworth-Pepin K."/>
            <person name="Wilson R.K."/>
            <person name="McClelland M."/>
            <person name="Forsythe S.J."/>
        </authorList>
    </citation>
    <scope>NUCLEOTIDE SEQUENCE [LARGE SCALE GENOMIC DNA]</scope>
    <source>
        <strain>ATCC BAA-894</strain>
    </source>
</reference>
<organism>
    <name type="scientific">Cronobacter sakazakii (strain ATCC BAA-894)</name>
    <name type="common">Enterobacter sakazakii</name>
    <dbReference type="NCBI Taxonomy" id="290339"/>
    <lineage>
        <taxon>Bacteria</taxon>
        <taxon>Pseudomonadati</taxon>
        <taxon>Pseudomonadota</taxon>
        <taxon>Gammaproteobacteria</taxon>
        <taxon>Enterobacterales</taxon>
        <taxon>Enterobacteriaceae</taxon>
        <taxon>Cronobacter</taxon>
    </lineage>
</organism>
<keyword id="KW-0456">Lyase</keyword>
<keyword id="KW-1185">Reference proteome</keyword>
<protein>
    <recommendedName>
        <fullName evidence="1">Methylglyoxal synthase</fullName>
        <shortName evidence="1">MGS</shortName>
        <ecNumber evidence="1">4.2.3.3</ecNumber>
    </recommendedName>
</protein>
<dbReference type="EC" id="4.2.3.3" evidence="1"/>
<dbReference type="EMBL" id="CP000783">
    <property type="protein sequence ID" value="ABU77631.1"/>
    <property type="molecule type" value="Genomic_DNA"/>
</dbReference>
<dbReference type="RefSeq" id="WP_007707605.1">
    <property type="nucleotide sequence ID" value="NC_009778.1"/>
</dbReference>
<dbReference type="SMR" id="A7ME47"/>
<dbReference type="KEGG" id="esa:ESA_02385"/>
<dbReference type="HOGENOM" id="CLU_120420_0_1_6"/>
<dbReference type="Proteomes" id="UP000000260">
    <property type="component" value="Chromosome"/>
</dbReference>
<dbReference type="GO" id="GO:0005829">
    <property type="term" value="C:cytosol"/>
    <property type="evidence" value="ECO:0007669"/>
    <property type="project" value="TreeGrafter"/>
</dbReference>
<dbReference type="GO" id="GO:0008929">
    <property type="term" value="F:methylglyoxal synthase activity"/>
    <property type="evidence" value="ECO:0007669"/>
    <property type="project" value="UniProtKB-UniRule"/>
</dbReference>
<dbReference type="GO" id="GO:0019242">
    <property type="term" value="P:methylglyoxal biosynthetic process"/>
    <property type="evidence" value="ECO:0007669"/>
    <property type="project" value="UniProtKB-UniRule"/>
</dbReference>
<dbReference type="CDD" id="cd01422">
    <property type="entry name" value="MGS"/>
    <property type="match status" value="1"/>
</dbReference>
<dbReference type="FunFam" id="3.40.50.1380:FF:000002">
    <property type="entry name" value="Methylglyoxal synthase"/>
    <property type="match status" value="1"/>
</dbReference>
<dbReference type="Gene3D" id="3.40.50.1380">
    <property type="entry name" value="Methylglyoxal synthase-like domain"/>
    <property type="match status" value="1"/>
</dbReference>
<dbReference type="HAMAP" id="MF_00549">
    <property type="entry name" value="Methylglyoxal_synth"/>
    <property type="match status" value="1"/>
</dbReference>
<dbReference type="InterPro" id="IPR004363">
    <property type="entry name" value="Methylgl_synth"/>
</dbReference>
<dbReference type="InterPro" id="IPR018148">
    <property type="entry name" value="Methylglyoxal_synth_AS"/>
</dbReference>
<dbReference type="InterPro" id="IPR011607">
    <property type="entry name" value="MGS-like_dom"/>
</dbReference>
<dbReference type="InterPro" id="IPR036914">
    <property type="entry name" value="MGS-like_dom_sf"/>
</dbReference>
<dbReference type="NCBIfam" id="TIGR00160">
    <property type="entry name" value="MGSA"/>
    <property type="match status" value="1"/>
</dbReference>
<dbReference type="NCBIfam" id="NF003559">
    <property type="entry name" value="PRK05234.1"/>
    <property type="match status" value="1"/>
</dbReference>
<dbReference type="PANTHER" id="PTHR30492">
    <property type="entry name" value="METHYLGLYOXAL SYNTHASE"/>
    <property type="match status" value="1"/>
</dbReference>
<dbReference type="PANTHER" id="PTHR30492:SF0">
    <property type="entry name" value="METHYLGLYOXAL SYNTHASE"/>
    <property type="match status" value="1"/>
</dbReference>
<dbReference type="Pfam" id="PF02142">
    <property type="entry name" value="MGS"/>
    <property type="match status" value="1"/>
</dbReference>
<dbReference type="PIRSF" id="PIRSF006614">
    <property type="entry name" value="Methylglyox_syn"/>
    <property type="match status" value="1"/>
</dbReference>
<dbReference type="SMART" id="SM00851">
    <property type="entry name" value="MGS"/>
    <property type="match status" value="1"/>
</dbReference>
<dbReference type="SUPFAM" id="SSF52335">
    <property type="entry name" value="Methylglyoxal synthase-like"/>
    <property type="match status" value="1"/>
</dbReference>
<dbReference type="PROSITE" id="PS01335">
    <property type="entry name" value="METHYLGLYOXAL_SYNTH"/>
    <property type="match status" value="1"/>
</dbReference>
<dbReference type="PROSITE" id="PS51855">
    <property type="entry name" value="MGS"/>
    <property type="match status" value="1"/>
</dbReference>
<name>MGSA_CROS8</name>
<comment type="function">
    <text evidence="1">Catalyzes the formation of methylglyoxal from dihydroxyacetone phosphate.</text>
</comment>
<comment type="catalytic activity">
    <reaction evidence="1">
        <text>dihydroxyacetone phosphate = methylglyoxal + phosphate</text>
        <dbReference type="Rhea" id="RHEA:17937"/>
        <dbReference type="ChEBI" id="CHEBI:17158"/>
        <dbReference type="ChEBI" id="CHEBI:43474"/>
        <dbReference type="ChEBI" id="CHEBI:57642"/>
        <dbReference type="EC" id="4.2.3.3"/>
    </reaction>
</comment>
<comment type="similarity">
    <text evidence="1">Belongs to the methylglyoxal synthase family.</text>
</comment>
<evidence type="ECO:0000255" key="1">
    <source>
        <dbReference type="HAMAP-Rule" id="MF_00549"/>
    </source>
</evidence>
<sequence length="152" mass="16777">MELTTRTLPAQKKIALVAHDHCKSMLMKWVERHKALLANHTLYATGTTGNLVQRATGLNVNAMLSGPMGGDQQVGAMIAEGKIDVLIFFWDPLNAVPHDPDVKALLRLATVWNIPVATNLSTADFIIQSPTFSDTLDVLIPDYPRYLAERLK</sequence>